<organism>
    <name type="scientific">Solanum lycopersicum</name>
    <name type="common">Tomato</name>
    <name type="synonym">Lycopersicon esculentum</name>
    <dbReference type="NCBI Taxonomy" id="4081"/>
    <lineage>
        <taxon>Eukaryota</taxon>
        <taxon>Viridiplantae</taxon>
        <taxon>Streptophyta</taxon>
        <taxon>Embryophyta</taxon>
        <taxon>Tracheophyta</taxon>
        <taxon>Spermatophyta</taxon>
        <taxon>Magnoliopsida</taxon>
        <taxon>eudicotyledons</taxon>
        <taxon>Gunneridae</taxon>
        <taxon>Pentapetalae</taxon>
        <taxon>asterids</taxon>
        <taxon>lamiids</taxon>
        <taxon>Solanales</taxon>
        <taxon>Solanaceae</taxon>
        <taxon>Solanoideae</taxon>
        <taxon>Solaneae</taxon>
        <taxon>Solanum</taxon>
        <taxon>Solanum subgen. Lycopersicon</taxon>
    </lineage>
</organism>
<gene>
    <name type="primary">TTS2</name>
</gene>
<comment type="function">
    <text evidence="2">Multifunctional oxidosqualene cyclase producing delta-amyrin (48%), alpha-amyrin (18%), beta-amyrin (13%) and 4 other minor triterpenes.</text>
</comment>
<comment type="catalytic activity">
    <reaction evidence="2">
        <text>(S)-2,3-epoxysqualene = delta-amyrin</text>
        <dbReference type="Rhea" id="RHEA:31883"/>
        <dbReference type="ChEBI" id="CHEBI:15441"/>
        <dbReference type="ChEBI" id="CHEBI:63467"/>
        <dbReference type="EC" id="5.4.99.55"/>
    </reaction>
</comment>
<comment type="catalytic activity">
    <reaction evidence="2">
        <text>(S)-2,3-epoxysqualene = beta-amyrin</text>
        <dbReference type="Rhea" id="RHEA:31007"/>
        <dbReference type="ChEBI" id="CHEBI:10352"/>
        <dbReference type="ChEBI" id="CHEBI:15441"/>
        <dbReference type="EC" id="5.4.99.39"/>
    </reaction>
</comment>
<comment type="catalytic activity">
    <reaction evidence="2">
        <text>(S)-2,3-epoxysqualene = alpha-amyrin</text>
        <dbReference type="Rhea" id="RHEA:31387"/>
        <dbReference type="ChEBI" id="CHEBI:10213"/>
        <dbReference type="ChEBI" id="CHEBI:15441"/>
        <dbReference type="EC" id="5.4.99.40"/>
    </reaction>
</comment>
<comment type="tissue specificity">
    <text evidence="2">Expressed in the leaves and in the epidermal cells but not in the inner tissues of the fruit.</text>
</comment>
<comment type="similarity">
    <text evidence="3">Belongs to the terpene cyclase/mutase family.</text>
</comment>
<evidence type="ECO:0000250" key="1">
    <source>
        <dbReference type="UniProtKB" id="P48449"/>
    </source>
</evidence>
<evidence type="ECO:0000269" key="2">
    <source>
    </source>
</evidence>
<evidence type="ECO:0000305" key="3"/>
<keyword id="KW-0413">Isomerase</keyword>
<keyword id="KW-1185">Reference proteome</keyword>
<keyword id="KW-0677">Repeat</keyword>
<accession>E7DN64</accession>
<sequence>MWKLKIAKGQDDRYLYSTNNYIGRQIWEFDPNAGTIEEQAKIEEARQHYWNNRYKVKPNSDLLWRMQFLREKNFKQRIRAVKVEEGEEISHEIATVALHRAVHFFSALQATDGHWPAESAGPLFFLPPLVMCMYITGHLNTVFPAEHRKEILRYIYCHQNEDGGWGLHIEGHSTMFCTAMSYICMRILGEGPEGGVNNACARARKWILDHGSVIAIPSWGKTWLSILGAFEWIGTNPMPPEFWILPSFLPVHPAKMWCYCRTVYMPMSYLYGKRFVGPITPLILKLREELYDQTYDEINWKKVRHVCAKEDLYYPHPFVQDLMWDSLYICTEPLLTRWPFNKLRNKALEVTMKHIHYEDENSRYITMGCVEKVLSMLACWVEDPNGDHFKKHLARIPDFLWVAEDGMKMQGCGSQSWDASLAIQALLASEMNDEISDTLKNGHDFIKQSQVKDNPSGDFKVMYRHISKGSWAFADQDLGWQVSDCTAEALKCCLLFSTMPPEIVGEAMDPVRLYDSVNVILSLQSKNGGLSAWEPAGAPEYLELLNPTEFFEDIVIEHEHVECTSSAIQALVRFKKLYPGHRTTEVDNFINNGVKYIEDVQEPDGSWYGNWGVCFIYASWFALGGLAAVGLSYSNCAAVRKSVEFLLRTQRSDGGWGESYRSCPDKVYRELETEHSNLVQTAWALMGLIHSGQVERDPRPLHRAAKLLINFQMEDGDFPQQEITGVFLRNCMMHYALYRNIFPLWGLAEYRRNVLVPLKHNYI</sequence>
<feature type="chain" id="PRO_0000413971" description="Delta-amyrin synthase">
    <location>
        <begin position="1"/>
        <end position="763"/>
    </location>
</feature>
<feature type="repeat" description="PFTB 1">
    <location>
        <begin position="148"/>
        <end position="189"/>
    </location>
</feature>
<feature type="repeat" description="PFTB 2">
    <location>
        <begin position="513"/>
        <end position="558"/>
    </location>
</feature>
<feature type="repeat" description="PFTB 3">
    <location>
        <begin position="590"/>
        <end position="630"/>
    </location>
</feature>
<feature type="repeat" description="PFTB 4">
    <location>
        <begin position="639"/>
        <end position="680"/>
    </location>
</feature>
<feature type="repeat" description="PFTB 5">
    <location>
        <begin position="701"/>
        <end position="742"/>
    </location>
</feature>
<feature type="active site" description="Proton donor" evidence="1">
    <location>
        <position position="484"/>
    </location>
</feature>
<reference key="1">
    <citation type="journal article" date="2011" name="Plant Physiol.">
        <title>Two oxidosqualene cyclases responsible for biosynthesis of tomato fruit cuticular triterpenoids.</title>
        <authorList>
            <person name="Wang Z."/>
            <person name="Guhling O."/>
            <person name="Yao R."/>
            <person name="Li F."/>
            <person name="Yeats T."/>
            <person name="Rose J."/>
            <person name="Jetter R."/>
        </authorList>
    </citation>
    <scope>NUCLEOTIDE SEQUENCE [MRNA]</scope>
    <scope>FUNCTION</scope>
    <scope>CATALYTIC ACTIVITY</scope>
    <scope>TISSUE SPECIFICITY</scope>
    <source>
        <strain>cv. MicroTom</strain>
    </source>
</reference>
<proteinExistence type="evidence at protein level"/>
<name>DAMS_SOLLC</name>
<dbReference type="EC" id="5.4.99.55"/>
<dbReference type="EC" id="5.4.99.40"/>
<dbReference type="EC" id="5.4.99.39"/>
<dbReference type="EMBL" id="HQ266580">
    <property type="protein sequence ID" value="ADU52575.1"/>
    <property type="molecule type" value="mRNA"/>
</dbReference>
<dbReference type="RefSeq" id="NP_001234597.1">
    <property type="nucleotide sequence ID" value="NM_001247668.2"/>
</dbReference>
<dbReference type="SMR" id="E7DN64"/>
<dbReference type="FunCoup" id="E7DN64">
    <property type="interactions" value="759"/>
</dbReference>
<dbReference type="STRING" id="4081.E7DN64"/>
<dbReference type="PaxDb" id="4081-Solyc12g006520.1.1"/>
<dbReference type="GeneID" id="100529100"/>
<dbReference type="KEGG" id="sly:100529100"/>
<dbReference type="eggNOG" id="KOG0497">
    <property type="taxonomic scope" value="Eukaryota"/>
</dbReference>
<dbReference type="InParanoid" id="E7DN64"/>
<dbReference type="OrthoDB" id="21502at2759"/>
<dbReference type="BioCyc" id="MetaCyc:MONOMER-17972"/>
<dbReference type="Proteomes" id="UP000004994">
    <property type="component" value="Unplaced"/>
</dbReference>
<dbReference type="ExpressionAtlas" id="E7DN64">
    <property type="expression patterns" value="baseline and differential"/>
</dbReference>
<dbReference type="GO" id="GO:0005811">
    <property type="term" value="C:lipid droplet"/>
    <property type="evidence" value="ECO:0007669"/>
    <property type="project" value="InterPro"/>
</dbReference>
<dbReference type="GO" id="GO:0042300">
    <property type="term" value="F:beta-amyrin synthase activity"/>
    <property type="evidence" value="ECO:0000318"/>
    <property type="project" value="GO_Central"/>
</dbReference>
<dbReference type="GO" id="GO:0016104">
    <property type="term" value="P:triterpenoid biosynthetic process"/>
    <property type="evidence" value="ECO:0000318"/>
    <property type="project" value="GO_Central"/>
</dbReference>
<dbReference type="CDD" id="cd02892">
    <property type="entry name" value="SQCY_1"/>
    <property type="match status" value="1"/>
</dbReference>
<dbReference type="FunFam" id="1.50.10.20:FF:000011">
    <property type="entry name" value="Terpene cyclase/mutase family member"/>
    <property type="match status" value="1"/>
</dbReference>
<dbReference type="FunFam" id="1.50.10.20:FF:000064">
    <property type="entry name" value="Uncharacterized protein"/>
    <property type="match status" value="1"/>
</dbReference>
<dbReference type="Gene3D" id="1.50.10.20">
    <property type="match status" value="2"/>
</dbReference>
<dbReference type="InterPro" id="IPR032696">
    <property type="entry name" value="SQ_cyclase_C"/>
</dbReference>
<dbReference type="InterPro" id="IPR032697">
    <property type="entry name" value="SQ_cyclase_N"/>
</dbReference>
<dbReference type="InterPro" id="IPR018333">
    <property type="entry name" value="Squalene_cyclase"/>
</dbReference>
<dbReference type="InterPro" id="IPR002365">
    <property type="entry name" value="Terpene_synthase_CS"/>
</dbReference>
<dbReference type="InterPro" id="IPR008930">
    <property type="entry name" value="Terpenoid_cyclase/PrenylTrfase"/>
</dbReference>
<dbReference type="NCBIfam" id="TIGR01787">
    <property type="entry name" value="squalene_cyclas"/>
    <property type="match status" value="1"/>
</dbReference>
<dbReference type="PANTHER" id="PTHR11764:SF86">
    <property type="entry name" value="DELTA-AMYRIN SYNTHASE"/>
    <property type="match status" value="1"/>
</dbReference>
<dbReference type="PANTHER" id="PTHR11764">
    <property type="entry name" value="TERPENE CYCLASE/MUTASE FAMILY MEMBER"/>
    <property type="match status" value="1"/>
</dbReference>
<dbReference type="Pfam" id="PF13243">
    <property type="entry name" value="SQHop_cyclase_C"/>
    <property type="match status" value="1"/>
</dbReference>
<dbReference type="Pfam" id="PF13249">
    <property type="entry name" value="SQHop_cyclase_N"/>
    <property type="match status" value="1"/>
</dbReference>
<dbReference type="SFLD" id="SFLDG01016">
    <property type="entry name" value="Prenyltransferase_Like_2"/>
    <property type="match status" value="1"/>
</dbReference>
<dbReference type="SUPFAM" id="SSF48239">
    <property type="entry name" value="Terpenoid cyclases/Protein prenyltransferases"/>
    <property type="match status" value="2"/>
</dbReference>
<dbReference type="PROSITE" id="PS01074">
    <property type="entry name" value="TERPENE_SYNTHASES"/>
    <property type="match status" value="1"/>
</dbReference>
<protein>
    <recommendedName>
        <fullName>Delta-amyrin synthase</fullName>
        <ecNumber>5.4.99.55</ecNumber>
    </recommendedName>
    <alternativeName>
        <fullName>Alpha-amyrin synthase</fullName>
        <ecNumber>5.4.99.40</ecNumber>
    </alternativeName>
    <alternativeName>
        <fullName>Beta-amyrin synthase</fullName>
        <ecNumber>5.4.99.39</ecNumber>
    </alternativeName>
    <alternativeName>
        <fullName>Triterpenoid synthase 2</fullName>
        <shortName>SlTTS2</shortName>
    </alternativeName>
</protein>